<sequence length="552" mass="59098">MRSDIVKKGFEKAPQRSLFKAMGYTDEEIRRPLIAVVNSWNEVVPGHIHLDKIAEAVKAGIRLAGATPMEFNVIGVCDGIAMGHIGMKYSLITRELIADSIEAMVMAHQFDGMVLIPNCDKIVPGMLMAAARVNIPSILISGGPMLAGRVDNKVCDLNSVFEAVGAYSAGKITDEELFALEENACPGCGSCSGMFTANTMNCLSEVLGMALPGNGTIPAVMAARIRLAKMAGMKIVELVERDIKPSDILTIEAFENALTVDMALGGSTNTILHLPAIANELGIKLNLDIINDISDKTPNLCKLSPAGHYHIEDLYFAGGVQAVMNELSKKGLIHLDLLTVTGKSVGENIKDAKVKDYNVIRPIDNPYSETGGLVIVRGNLAPDGAVVKKSAVPPKLMRHRGPARVFESGEEVFEAILKGKIQKGDVIVIRYEGPKGGPGMREMLSPTSALAGVGLIEDVALITDGRFSGATRGACFGHVSPEAAERGPIAAVQDGDIISIDIENKTLTLEVPEEEIKRRLESLGPFEPKVKKGYLYRYSKLVRSASTGAILE</sequence>
<gene>
    <name evidence="1" type="primary">ilvD</name>
    <name type="ordered locus">Csac_0836</name>
</gene>
<feature type="chain" id="PRO_1000000968" description="Dihydroxy-acid dehydratase">
    <location>
        <begin position="1"/>
        <end position="552"/>
    </location>
</feature>
<feature type="active site" description="Proton acceptor" evidence="1">
    <location>
        <position position="468"/>
    </location>
</feature>
<feature type="binding site" evidence="1">
    <location>
        <position position="78"/>
    </location>
    <ligand>
        <name>Mg(2+)</name>
        <dbReference type="ChEBI" id="CHEBI:18420"/>
    </ligand>
</feature>
<feature type="binding site" evidence="1">
    <location>
        <position position="119"/>
    </location>
    <ligand>
        <name>[2Fe-2S] cluster</name>
        <dbReference type="ChEBI" id="CHEBI:190135"/>
    </ligand>
</feature>
<feature type="binding site" evidence="1">
    <location>
        <position position="120"/>
    </location>
    <ligand>
        <name>Mg(2+)</name>
        <dbReference type="ChEBI" id="CHEBI:18420"/>
    </ligand>
</feature>
<feature type="binding site" description="via carbamate group" evidence="1">
    <location>
        <position position="121"/>
    </location>
    <ligand>
        <name>Mg(2+)</name>
        <dbReference type="ChEBI" id="CHEBI:18420"/>
    </ligand>
</feature>
<feature type="binding site" evidence="1">
    <location>
        <position position="191"/>
    </location>
    <ligand>
        <name>[2Fe-2S] cluster</name>
        <dbReference type="ChEBI" id="CHEBI:190135"/>
    </ligand>
</feature>
<feature type="binding site" evidence="1">
    <location>
        <position position="442"/>
    </location>
    <ligand>
        <name>Mg(2+)</name>
        <dbReference type="ChEBI" id="CHEBI:18420"/>
    </ligand>
</feature>
<feature type="modified residue" description="N6-carboxylysine" evidence="1">
    <location>
        <position position="121"/>
    </location>
</feature>
<comment type="function">
    <text evidence="1">Functions in the biosynthesis of branched-chain amino acids. Catalyzes the dehydration of (2R,3R)-2,3-dihydroxy-3-methylpentanoate (2,3-dihydroxy-3-methylvalerate) into 2-oxo-3-methylpentanoate (2-oxo-3-methylvalerate) and of (2R)-2,3-dihydroxy-3-methylbutanoate (2,3-dihydroxyisovalerate) into 2-oxo-3-methylbutanoate (2-oxoisovalerate), the penultimate precursor to L-isoleucine and L-valine, respectively.</text>
</comment>
<comment type="catalytic activity">
    <reaction evidence="1">
        <text>(2R)-2,3-dihydroxy-3-methylbutanoate = 3-methyl-2-oxobutanoate + H2O</text>
        <dbReference type="Rhea" id="RHEA:24809"/>
        <dbReference type="ChEBI" id="CHEBI:11851"/>
        <dbReference type="ChEBI" id="CHEBI:15377"/>
        <dbReference type="ChEBI" id="CHEBI:49072"/>
        <dbReference type="EC" id="4.2.1.9"/>
    </reaction>
    <physiologicalReaction direction="left-to-right" evidence="1">
        <dbReference type="Rhea" id="RHEA:24810"/>
    </physiologicalReaction>
</comment>
<comment type="catalytic activity">
    <reaction evidence="1">
        <text>(2R,3R)-2,3-dihydroxy-3-methylpentanoate = (S)-3-methyl-2-oxopentanoate + H2O</text>
        <dbReference type="Rhea" id="RHEA:27694"/>
        <dbReference type="ChEBI" id="CHEBI:15377"/>
        <dbReference type="ChEBI" id="CHEBI:35146"/>
        <dbReference type="ChEBI" id="CHEBI:49258"/>
        <dbReference type="EC" id="4.2.1.9"/>
    </reaction>
    <physiologicalReaction direction="left-to-right" evidence="1">
        <dbReference type="Rhea" id="RHEA:27695"/>
    </physiologicalReaction>
</comment>
<comment type="cofactor">
    <cofactor evidence="1">
        <name>[2Fe-2S] cluster</name>
        <dbReference type="ChEBI" id="CHEBI:190135"/>
    </cofactor>
    <text evidence="1">Binds 1 [2Fe-2S] cluster per subunit. This cluster acts as a Lewis acid cofactor.</text>
</comment>
<comment type="cofactor">
    <cofactor evidence="1">
        <name>Mg(2+)</name>
        <dbReference type="ChEBI" id="CHEBI:18420"/>
    </cofactor>
</comment>
<comment type="pathway">
    <text evidence="1">Amino-acid biosynthesis; L-isoleucine biosynthesis; L-isoleucine from 2-oxobutanoate: step 3/4.</text>
</comment>
<comment type="pathway">
    <text evidence="1">Amino-acid biosynthesis; L-valine biosynthesis; L-valine from pyruvate: step 3/4.</text>
</comment>
<comment type="subunit">
    <text evidence="1">Homodimer.</text>
</comment>
<comment type="similarity">
    <text evidence="1">Belongs to the IlvD/Edd family.</text>
</comment>
<protein>
    <recommendedName>
        <fullName evidence="1">Dihydroxy-acid dehydratase</fullName>
        <shortName evidence="1">DAD</shortName>
        <ecNumber evidence="1">4.2.1.9</ecNumber>
    </recommendedName>
</protein>
<reference key="1">
    <citation type="submission" date="2007-04" db="EMBL/GenBank/DDBJ databases">
        <title>Genome sequence of the thermophilic hydrogen-producing bacterium Caldicellulosiruptor saccharolyticus DSM 8903.</title>
        <authorList>
            <person name="Copeland A."/>
            <person name="Lucas S."/>
            <person name="Lapidus A."/>
            <person name="Barry K."/>
            <person name="Detter J.C."/>
            <person name="Glavina del Rio T."/>
            <person name="Hammon N."/>
            <person name="Israni S."/>
            <person name="Dalin E."/>
            <person name="Tice H."/>
            <person name="Pitluck S."/>
            <person name="Kiss H."/>
            <person name="Brettin T."/>
            <person name="Bruce D."/>
            <person name="Han C."/>
            <person name="Schmutz J."/>
            <person name="Larimer F."/>
            <person name="Land M."/>
            <person name="Hauser L."/>
            <person name="Kyrpides N."/>
            <person name="Lykidis A."/>
            <person name="van de Werken H.J.G."/>
            <person name="Verhaart M.R.A."/>
            <person name="VanFossen A.L."/>
            <person name="Lewis D.L."/>
            <person name="Nichols J.D."/>
            <person name="Goorissen H.P."/>
            <person name="van Niel E.W.J."/>
            <person name="Stams F.J.M."/>
            <person name="Willquist K.U."/>
            <person name="Ward D.E."/>
            <person name="van der Oost J."/>
            <person name="Kelly R.M."/>
            <person name="Kengen S.M.W."/>
            <person name="Richardson P."/>
        </authorList>
    </citation>
    <scope>NUCLEOTIDE SEQUENCE [LARGE SCALE GENOMIC DNA]</scope>
    <source>
        <strain>ATCC 43494 / DSM 8903 / Tp8T 6331</strain>
    </source>
</reference>
<proteinExistence type="inferred from homology"/>
<keyword id="KW-0001">2Fe-2S</keyword>
<keyword id="KW-0028">Amino-acid biosynthesis</keyword>
<keyword id="KW-0100">Branched-chain amino acid biosynthesis</keyword>
<keyword id="KW-0408">Iron</keyword>
<keyword id="KW-0411">Iron-sulfur</keyword>
<keyword id="KW-0456">Lyase</keyword>
<keyword id="KW-0460">Magnesium</keyword>
<keyword id="KW-0479">Metal-binding</keyword>
<name>ILVD_CALS8</name>
<dbReference type="EC" id="4.2.1.9" evidence="1"/>
<dbReference type="EMBL" id="CP000679">
    <property type="protein sequence ID" value="ABP66454.1"/>
    <property type="molecule type" value="Genomic_DNA"/>
</dbReference>
<dbReference type="RefSeq" id="WP_011916402.1">
    <property type="nucleotide sequence ID" value="NC_009437.1"/>
</dbReference>
<dbReference type="SMR" id="A4XHR9"/>
<dbReference type="STRING" id="351627.Csac_0836"/>
<dbReference type="KEGG" id="csc:Csac_0836"/>
<dbReference type="eggNOG" id="COG0129">
    <property type="taxonomic scope" value="Bacteria"/>
</dbReference>
<dbReference type="HOGENOM" id="CLU_014271_4_2_9"/>
<dbReference type="OrthoDB" id="9807077at2"/>
<dbReference type="UniPathway" id="UPA00047">
    <property type="reaction ID" value="UER00057"/>
</dbReference>
<dbReference type="UniPathway" id="UPA00049">
    <property type="reaction ID" value="UER00061"/>
</dbReference>
<dbReference type="Proteomes" id="UP000000256">
    <property type="component" value="Chromosome"/>
</dbReference>
<dbReference type="GO" id="GO:0005829">
    <property type="term" value="C:cytosol"/>
    <property type="evidence" value="ECO:0007669"/>
    <property type="project" value="TreeGrafter"/>
</dbReference>
<dbReference type="GO" id="GO:0051537">
    <property type="term" value="F:2 iron, 2 sulfur cluster binding"/>
    <property type="evidence" value="ECO:0007669"/>
    <property type="project" value="UniProtKB-UniRule"/>
</dbReference>
<dbReference type="GO" id="GO:0004160">
    <property type="term" value="F:dihydroxy-acid dehydratase activity"/>
    <property type="evidence" value="ECO:0007669"/>
    <property type="project" value="UniProtKB-UniRule"/>
</dbReference>
<dbReference type="GO" id="GO:0000287">
    <property type="term" value="F:magnesium ion binding"/>
    <property type="evidence" value="ECO:0007669"/>
    <property type="project" value="UniProtKB-UniRule"/>
</dbReference>
<dbReference type="GO" id="GO:0009097">
    <property type="term" value="P:isoleucine biosynthetic process"/>
    <property type="evidence" value="ECO:0007669"/>
    <property type="project" value="UniProtKB-UniRule"/>
</dbReference>
<dbReference type="GO" id="GO:0009099">
    <property type="term" value="P:L-valine biosynthetic process"/>
    <property type="evidence" value="ECO:0007669"/>
    <property type="project" value="UniProtKB-UniRule"/>
</dbReference>
<dbReference type="FunFam" id="3.50.30.80:FF:000001">
    <property type="entry name" value="Dihydroxy-acid dehydratase"/>
    <property type="match status" value="1"/>
</dbReference>
<dbReference type="Gene3D" id="3.50.30.80">
    <property type="entry name" value="IlvD/EDD C-terminal domain-like"/>
    <property type="match status" value="1"/>
</dbReference>
<dbReference type="HAMAP" id="MF_00012">
    <property type="entry name" value="IlvD"/>
    <property type="match status" value="1"/>
</dbReference>
<dbReference type="InterPro" id="IPR042096">
    <property type="entry name" value="Dihydro-acid_dehy_C"/>
</dbReference>
<dbReference type="InterPro" id="IPR004404">
    <property type="entry name" value="DihydroxyA_deHydtase"/>
</dbReference>
<dbReference type="InterPro" id="IPR020558">
    <property type="entry name" value="DiOHA_6PGluconate_deHydtase_CS"/>
</dbReference>
<dbReference type="InterPro" id="IPR056740">
    <property type="entry name" value="ILV_EDD_C"/>
</dbReference>
<dbReference type="InterPro" id="IPR000581">
    <property type="entry name" value="ILV_EDD_N"/>
</dbReference>
<dbReference type="InterPro" id="IPR037237">
    <property type="entry name" value="IlvD/EDD_N"/>
</dbReference>
<dbReference type="NCBIfam" id="TIGR00110">
    <property type="entry name" value="ilvD"/>
    <property type="match status" value="1"/>
</dbReference>
<dbReference type="NCBIfam" id="NF002068">
    <property type="entry name" value="PRK00911.1"/>
    <property type="match status" value="1"/>
</dbReference>
<dbReference type="PANTHER" id="PTHR43661">
    <property type="entry name" value="D-XYLONATE DEHYDRATASE"/>
    <property type="match status" value="1"/>
</dbReference>
<dbReference type="PANTHER" id="PTHR43661:SF3">
    <property type="entry name" value="D-XYLONATE DEHYDRATASE YAGF-RELATED"/>
    <property type="match status" value="1"/>
</dbReference>
<dbReference type="Pfam" id="PF24877">
    <property type="entry name" value="ILV_EDD_C"/>
    <property type="match status" value="1"/>
</dbReference>
<dbReference type="Pfam" id="PF00920">
    <property type="entry name" value="ILVD_EDD_N"/>
    <property type="match status" value="1"/>
</dbReference>
<dbReference type="SUPFAM" id="SSF143975">
    <property type="entry name" value="IlvD/EDD N-terminal domain-like"/>
    <property type="match status" value="1"/>
</dbReference>
<dbReference type="SUPFAM" id="SSF52016">
    <property type="entry name" value="LeuD/IlvD-like"/>
    <property type="match status" value="1"/>
</dbReference>
<dbReference type="PROSITE" id="PS00886">
    <property type="entry name" value="ILVD_EDD_1"/>
    <property type="match status" value="1"/>
</dbReference>
<dbReference type="PROSITE" id="PS00887">
    <property type="entry name" value="ILVD_EDD_2"/>
    <property type="match status" value="1"/>
</dbReference>
<evidence type="ECO:0000255" key="1">
    <source>
        <dbReference type="HAMAP-Rule" id="MF_00012"/>
    </source>
</evidence>
<organism>
    <name type="scientific">Caldicellulosiruptor saccharolyticus (strain ATCC 43494 / DSM 8903 / Tp8T 6331)</name>
    <dbReference type="NCBI Taxonomy" id="351627"/>
    <lineage>
        <taxon>Bacteria</taxon>
        <taxon>Bacillati</taxon>
        <taxon>Bacillota</taxon>
        <taxon>Bacillota incertae sedis</taxon>
        <taxon>Caldicellulosiruptorales</taxon>
        <taxon>Caldicellulosiruptoraceae</taxon>
        <taxon>Caldicellulosiruptor</taxon>
    </lineage>
</organism>
<accession>A4XHR9</accession>